<evidence type="ECO:0000250" key="1"/>
<evidence type="ECO:0000305" key="2"/>
<feature type="chain" id="PRO_0000125112" description="Large ribosomal subunit protein uL22">
    <location>
        <begin position="1"/>
        <end position="91" status="greater than"/>
    </location>
</feature>
<feature type="non-terminal residue">
    <location>
        <position position="91"/>
    </location>
</feature>
<organism>
    <name type="scientific">Ash yellows phytoplasma</name>
    <dbReference type="NCBI Taxonomy" id="35780"/>
    <lineage>
        <taxon>Bacteria</taxon>
        <taxon>Bacillati</taxon>
        <taxon>Mycoplasmatota</taxon>
        <taxon>Mollicutes</taxon>
        <taxon>Acholeplasmatales</taxon>
        <taxon>Acholeplasmataceae</taxon>
        <taxon>Candidatus Phytoplasma</taxon>
        <taxon>16SrVII (Ash yellows group)</taxon>
    </lineage>
</organism>
<dbReference type="EMBL" id="L26999">
    <property type="protein sequence ID" value="AAA83937.1"/>
    <property type="molecule type" value="Genomic_DNA"/>
</dbReference>
<dbReference type="GO" id="GO:0022625">
    <property type="term" value="C:cytosolic large ribosomal subunit"/>
    <property type="evidence" value="ECO:0007669"/>
    <property type="project" value="TreeGrafter"/>
</dbReference>
<dbReference type="GO" id="GO:0019843">
    <property type="term" value="F:rRNA binding"/>
    <property type="evidence" value="ECO:0007669"/>
    <property type="project" value="UniProtKB-KW"/>
</dbReference>
<dbReference type="GO" id="GO:0003735">
    <property type="term" value="F:structural constituent of ribosome"/>
    <property type="evidence" value="ECO:0007669"/>
    <property type="project" value="InterPro"/>
</dbReference>
<dbReference type="GO" id="GO:0006412">
    <property type="term" value="P:translation"/>
    <property type="evidence" value="ECO:0007669"/>
    <property type="project" value="InterPro"/>
</dbReference>
<dbReference type="CDD" id="cd00336">
    <property type="entry name" value="Ribosomal_L22"/>
    <property type="match status" value="1"/>
</dbReference>
<dbReference type="Gene3D" id="3.90.470.10">
    <property type="entry name" value="Ribosomal protein L22/L17"/>
    <property type="match status" value="1"/>
</dbReference>
<dbReference type="InterPro" id="IPR001063">
    <property type="entry name" value="Ribosomal_uL22"/>
</dbReference>
<dbReference type="InterPro" id="IPR005727">
    <property type="entry name" value="Ribosomal_uL22_bac/chlpt-type"/>
</dbReference>
<dbReference type="InterPro" id="IPR047867">
    <property type="entry name" value="Ribosomal_uL22_bac/org-type"/>
</dbReference>
<dbReference type="InterPro" id="IPR036394">
    <property type="entry name" value="Ribosomal_uL22_sf"/>
</dbReference>
<dbReference type="NCBIfam" id="TIGR01044">
    <property type="entry name" value="rplV_bact"/>
    <property type="match status" value="1"/>
</dbReference>
<dbReference type="PANTHER" id="PTHR13501">
    <property type="entry name" value="CHLOROPLAST 50S RIBOSOMAL PROTEIN L22-RELATED"/>
    <property type="match status" value="1"/>
</dbReference>
<dbReference type="PANTHER" id="PTHR13501:SF8">
    <property type="entry name" value="LARGE RIBOSOMAL SUBUNIT PROTEIN UL22M"/>
    <property type="match status" value="1"/>
</dbReference>
<dbReference type="Pfam" id="PF00237">
    <property type="entry name" value="Ribosomal_L22"/>
    <property type="match status" value="1"/>
</dbReference>
<dbReference type="SUPFAM" id="SSF54843">
    <property type="entry name" value="Ribosomal protein L22"/>
    <property type="match status" value="1"/>
</dbReference>
<proteinExistence type="inferred from homology"/>
<accession>Q44593</accession>
<reference key="1">
    <citation type="journal article" date="1994" name="J. Bacteriol.">
        <title>Phylogeny of mycoplasmalike organisms (phytoplasmas): a basis for their classification.</title>
        <authorList>
            <person name="Gundersen D.E."/>
            <person name="Lee I.M."/>
            <person name="Rehner S.A."/>
            <person name="Davis R.E."/>
            <person name="Kingsbury D.T."/>
        </authorList>
    </citation>
    <scope>NUCLEOTIDE SEQUENCE [GENOMIC DNA]</scope>
</reference>
<protein>
    <recommendedName>
        <fullName evidence="2">Large ribosomal subunit protein uL22</fullName>
    </recommendedName>
    <alternativeName>
        <fullName>50S ribosomal protein L22</fullName>
    </alternativeName>
</protein>
<name>RL22_ASHYP</name>
<gene>
    <name type="primary">rplV</name>
    <name type="synonym">rpl22</name>
</gene>
<comment type="function">
    <text evidence="1">This protein binds specifically to 23S rRNA; its binding is stimulated by other ribosomal proteins, e.g. L4, L17, and L20. It is important during the early stages of 50S assembly. It makes multiple contacts with different domains of the 23S rRNA in the assembled 50S subunit and ribosome (By similarity).</text>
</comment>
<comment type="function">
    <text evidence="1">The globular domain of the protein is located near the polypeptide exit tunnel on the outside of the subunit, while an extended beta-hairpin is found that lines the wall of the exit tunnel in the center of the 70S ribosome.</text>
</comment>
<comment type="subunit">
    <text evidence="1">Part of the 50S ribosomal subunit.</text>
</comment>
<comment type="similarity">
    <text evidence="2">Belongs to the universal ribosomal protein uL22 family.</text>
</comment>
<sequence length="91" mass="10254">MKVKAVAKQVPVTPRKXRLVVDLIRGKKIKEAESILMFTPRSASPILAKLLKSAVANSVHNFNFNIDDLYVEEIFVNEGIRLPRLFPRAKG</sequence>
<keyword id="KW-0687">Ribonucleoprotein</keyword>
<keyword id="KW-0689">Ribosomal protein</keyword>
<keyword id="KW-0694">RNA-binding</keyword>
<keyword id="KW-0699">rRNA-binding</keyword>